<sequence>MDFVNNDTRQIAKNLLGVKVIYQDTTQTYTGYIVETEAYLGLNDRAAHGYGGKITPKVTSLYKRGGTIYAHVMHTHLLINFVTKSEGIPEGVLIRAIEPEDGLSAMFRNRGKKGYEVTNGPGKWTKAFNIPRAIDGATLNDCRLSIDTKNRKYPKDIIASPRIGIPNKGDWTHKSLRYTVKGNPFVSRMRKSDCMFPEDTWK</sequence>
<proteinExistence type="inferred from homology"/>
<accession>Q2YYZ2</accession>
<organism>
    <name type="scientific">Staphylococcus aureus (strain bovine RF122 / ET3-1)</name>
    <dbReference type="NCBI Taxonomy" id="273036"/>
    <lineage>
        <taxon>Bacteria</taxon>
        <taxon>Bacillati</taxon>
        <taxon>Bacillota</taxon>
        <taxon>Bacilli</taxon>
        <taxon>Bacillales</taxon>
        <taxon>Staphylococcaceae</taxon>
        <taxon>Staphylococcus</taxon>
    </lineage>
</organism>
<name>3MGH_STAAB</name>
<evidence type="ECO:0000255" key="1">
    <source>
        <dbReference type="HAMAP-Rule" id="MF_00527"/>
    </source>
</evidence>
<keyword id="KW-0227">DNA damage</keyword>
<keyword id="KW-0234">DNA repair</keyword>
<keyword id="KW-0378">Hydrolase</keyword>
<gene>
    <name type="ordered locus">SAB2222</name>
</gene>
<comment type="similarity">
    <text evidence="1">Belongs to the DNA glycosylase MPG family.</text>
</comment>
<protein>
    <recommendedName>
        <fullName evidence="1">Putative 3-methyladenine DNA glycosylase</fullName>
        <ecNumber evidence="1">3.2.2.-</ecNumber>
    </recommendedName>
</protein>
<dbReference type="EC" id="3.2.2.-" evidence="1"/>
<dbReference type="EMBL" id="AJ938182">
    <property type="protein sequence ID" value="CAI81911.1"/>
    <property type="molecule type" value="Genomic_DNA"/>
</dbReference>
<dbReference type="RefSeq" id="WP_000348297.1">
    <property type="nucleotide sequence ID" value="NC_007622.1"/>
</dbReference>
<dbReference type="SMR" id="Q2YYZ2"/>
<dbReference type="KEGG" id="sab:SAB2222"/>
<dbReference type="HOGENOM" id="CLU_060471_2_0_9"/>
<dbReference type="GO" id="GO:0003905">
    <property type="term" value="F:alkylbase DNA N-glycosylase activity"/>
    <property type="evidence" value="ECO:0007669"/>
    <property type="project" value="InterPro"/>
</dbReference>
<dbReference type="GO" id="GO:0003677">
    <property type="term" value="F:DNA binding"/>
    <property type="evidence" value="ECO:0007669"/>
    <property type="project" value="InterPro"/>
</dbReference>
<dbReference type="GO" id="GO:0006284">
    <property type="term" value="P:base-excision repair"/>
    <property type="evidence" value="ECO:0007669"/>
    <property type="project" value="InterPro"/>
</dbReference>
<dbReference type="CDD" id="cd00540">
    <property type="entry name" value="AAG"/>
    <property type="match status" value="1"/>
</dbReference>
<dbReference type="FunFam" id="3.10.300.10:FF:000001">
    <property type="entry name" value="Putative 3-methyladenine DNA glycosylase"/>
    <property type="match status" value="1"/>
</dbReference>
<dbReference type="Gene3D" id="3.10.300.10">
    <property type="entry name" value="Methylpurine-DNA glycosylase (MPG)"/>
    <property type="match status" value="1"/>
</dbReference>
<dbReference type="HAMAP" id="MF_00527">
    <property type="entry name" value="3MGH"/>
    <property type="match status" value="1"/>
</dbReference>
<dbReference type="InterPro" id="IPR011034">
    <property type="entry name" value="Formyl_transferase-like_C_sf"/>
</dbReference>
<dbReference type="InterPro" id="IPR003180">
    <property type="entry name" value="MPG"/>
</dbReference>
<dbReference type="InterPro" id="IPR036995">
    <property type="entry name" value="MPG_sf"/>
</dbReference>
<dbReference type="NCBIfam" id="TIGR00567">
    <property type="entry name" value="3mg"/>
    <property type="match status" value="1"/>
</dbReference>
<dbReference type="PANTHER" id="PTHR10429">
    <property type="entry name" value="DNA-3-METHYLADENINE GLYCOSYLASE"/>
    <property type="match status" value="1"/>
</dbReference>
<dbReference type="PANTHER" id="PTHR10429:SF0">
    <property type="entry name" value="DNA-3-METHYLADENINE GLYCOSYLASE"/>
    <property type="match status" value="1"/>
</dbReference>
<dbReference type="Pfam" id="PF02245">
    <property type="entry name" value="Pur_DNA_glyco"/>
    <property type="match status" value="1"/>
</dbReference>
<dbReference type="SUPFAM" id="SSF50486">
    <property type="entry name" value="FMT C-terminal domain-like"/>
    <property type="match status" value="1"/>
</dbReference>
<reference key="1">
    <citation type="journal article" date="2007" name="PLoS ONE">
        <title>Molecular correlates of host specialization in Staphylococcus aureus.</title>
        <authorList>
            <person name="Herron-Olson L."/>
            <person name="Fitzgerald J.R."/>
            <person name="Musser J.M."/>
            <person name="Kapur V."/>
        </authorList>
    </citation>
    <scope>NUCLEOTIDE SEQUENCE [LARGE SCALE GENOMIC DNA]</scope>
    <source>
        <strain>bovine RF122 / ET3-1</strain>
    </source>
</reference>
<feature type="chain" id="PRO_0000265060" description="Putative 3-methyladenine DNA glycosylase">
    <location>
        <begin position="1"/>
        <end position="202"/>
    </location>
</feature>